<accession>Q48BF1</accession>
<reference key="1">
    <citation type="journal article" date="2005" name="J. Bacteriol.">
        <title>Whole-genome sequence analysis of Pseudomonas syringae pv. phaseolicola 1448A reveals divergence among pathovars in genes involved in virulence and transposition.</title>
        <authorList>
            <person name="Joardar V."/>
            <person name="Lindeberg M."/>
            <person name="Jackson R.W."/>
            <person name="Selengut J."/>
            <person name="Dodson R."/>
            <person name="Brinkac L.M."/>
            <person name="Daugherty S.C."/>
            <person name="DeBoy R.T."/>
            <person name="Durkin A.S."/>
            <person name="Gwinn Giglio M."/>
            <person name="Madupu R."/>
            <person name="Nelson W.C."/>
            <person name="Rosovitz M.J."/>
            <person name="Sullivan S.A."/>
            <person name="Crabtree J."/>
            <person name="Creasy T."/>
            <person name="Davidsen T.M."/>
            <person name="Haft D.H."/>
            <person name="Zafar N."/>
            <person name="Zhou L."/>
            <person name="Halpin R."/>
            <person name="Holley T."/>
            <person name="Khouri H.M."/>
            <person name="Feldblyum T.V."/>
            <person name="White O."/>
            <person name="Fraser C.M."/>
            <person name="Chatterjee A.K."/>
            <person name="Cartinhour S."/>
            <person name="Schneider D."/>
            <person name="Mansfield J.W."/>
            <person name="Collmer A."/>
            <person name="Buell R."/>
        </authorList>
    </citation>
    <scope>NUCLEOTIDE SEQUENCE [LARGE SCALE GENOMIC DNA]</scope>
    <source>
        <strain>1448A / Race 6</strain>
    </source>
</reference>
<name>YIDD_PSE14</name>
<evidence type="ECO:0000255" key="1">
    <source>
        <dbReference type="HAMAP-Rule" id="MF_00386"/>
    </source>
</evidence>
<proteinExistence type="inferred from homology"/>
<comment type="function">
    <text evidence="1">Could be involved in insertion of integral membrane proteins into the membrane.</text>
</comment>
<comment type="subcellular location">
    <subcellularLocation>
        <location evidence="1">Cell inner membrane</location>
        <topology evidence="1">Peripheral membrane protein</topology>
        <orientation evidence="1">Cytoplasmic side</orientation>
    </subcellularLocation>
</comment>
<comment type="similarity">
    <text evidence="1">Belongs to the UPF0161 family.</text>
</comment>
<protein>
    <recommendedName>
        <fullName evidence="1">Putative membrane protein insertion efficiency factor</fullName>
    </recommendedName>
</protein>
<sequence>MRKLALVPIQFYRYAMSPLMASHCRFYPSCSCYAYEAIENHGLLRGGWLSIRRLGRCHPWNPGGYDPVPAVPTSRSSSMAE</sequence>
<feature type="chain" id="PRO_0000253145" description="Putative membrane protein insertion efficiency factor">
    <location>
        <begin position="1"/>
        <end position="81"/>
    </location>
</feature>
<dbReference type="EMBL" id="CP000058">
    <property type="protein sequence ID" value="AAZ34657.1"/>
    <property type="molecule type" value="Genomic_DNA"/>
</dbReference>
<dbReference type="RefSeq" id="WP_011169943.1">
    <property type="nucleotide sequence ID" value="NC_005773.3"/>
</dbReference>
<dbReference type="KEGG" id="psp:PSPPH_5221"/>
<dbReference type="eggNOG" id="COG0759">
    <property type="taxonomic scope" value="Bacteria"/>
</dbReference>
<dbReference type="HOGENOM" id="CLU_144811_6_1_6"/>
<dbReference type="Proteomes" id="UP000000551">
    <property type="component" value="Chromosome"/>
</dbReference>
<dbReference type="GO" id="GO:0005886">
    <property type="term" value="C:plasma membrane"/>
    <property type="evidence" value="ECO:0007669"/>
    <property type="project" value="UniProtKB-SubCell"/>
</dbReference>
<dbReference type="HAMAP" id="MF_00386">
    <property type="entry name" value="UPF0161_YidD"/>
    <property type="match status" value="1"/>
</dbReference>
<dbReference type="InterPro" id="IPR002696">
    <property type="entry name" value="Membr_insert_effic_factor_YidD"/>
</dbReference>
<dbReference type="NCBIfam" id="TIGR00278">
    <property type="entry name" value="membrane protein insertion efficiency factor YidD"/>
    <property type="match status" value="1"/>
</dbReference>
<dbReference type="PANTHER" id="PTHR33383">
    <property type="entry name" value="MEMBRANE PROTEIN INSERTION EFFICIENCY FACTOR-RELATED"/>
    <property type="match status" value="1"/>
</dbReference>
<dbReference type="PANTHER" id="PTHR33383:SF1">
    <property type="entry name" value="MEMBRANE PROTEIN INSERTION EFFICIENCY FACTOR-RELATED"/>
    <property type="match status" value="1"/>
</dbReference>
<dbReference type="Pfam" id="PF01809">
    <property type="entry name" value="YidD"/>
    <property type="match status" value="1"/>
</dbReference>
<dbReference type="SMART" id="SM01234">
    <property type="entry name" value="Haemolytic"/>
    <property type="match status" value="1"/>
</dbReference>
<keyword id="KW-0997">Cell inner membrane</keyword>
<keyword id="KW-1003">Cell membrane</keyword>
<keyword id="KW-0472">Membrane</keyword>
<gene>
    <name type="ordered locus">PSPPH_5221</name>
</gene>
<organism>
    <name type="scientific">Pseudomonas savastanoi pv. phaseolicola (strain 1448A / Race 6)</name>
    <name type="common">Pseudomonas syringae pv. phaseolicola (strain 1448A / Race 6)</name>
    <dbReference type="NCBI Taxonomy" id="264730"/>
    <lineage>
        <taxon>Bacteria</taxon>
        <taxon>Pseudomonadati</taxon>
        <taxon>Pseudomonadota</taxon>
        <taxon>Gammaproteobacteria</taxon>
        <taxon>Pseudomonadales</taxon>
        <taxon>Pseudomonadaceae</taxon>
        <taxon>Pseudomonas</taxon>
    </lineage>
</organism>